<sequence>MEMASAFTLNVRLDNIAIITIDVPDEKMNTLKAEFASQVRAIIKQLRENKELRGVVFISAKPDNFIAGADINMIGNCKTAQEAEALARQGQQLMAEIHALPIPVIAAIHGACLGGGLELALACHGRVCTDDPKTVLGLPEVQLGLLPGSGGTQRLPRLIGVSTALEMILTGKQLRAKQALKLGLVDDVVPHSILLEAAVELAKKDRPSSRPLPVRERILAGPLGRALLFKMVGKKTEHKTQGNYPATERILEVVETGLAQGTSSGYDAEARAFGELAMTPQSQALRSIFFASTDVKKDPGSDAPPAPLNSVGILGGGLMGGGIAYVTACKAGLPVRIKDINPQGINHALKYSWDQLEGKVRRRHLKASERDKQLALISGTTDYRGFAHRDLIIEAVFENLELKQQMVAEVEQNCAAHTIFASNTSSLPIGDIAAHAARPEQVIGLHFFSPVEKMPLVEIIPHAGTSAQTIATTVKLAKKQGKTPIVVRDKAGFYVNRILAPYINEAIRMLTEGERVEHIDAALVKFGFPVGPIQLLDEVGIDTGTKIIPVLEAAYGERFSAPANVVSSILNDDRKGRKNGRGFYLYGQKGRKSKKQVDPAIYPLIGAQGQGRLSAPQVAERCVMLMLNEAVRCVDEQVIRSVRDGDIGAVFGIGFPPFLGGPFRYIDSLGAGEVVAIMQRLATQYGSRFTPCERLVEMGARGESFWKTTATDLQ</sequence>
<keyword id="KW-0963">Cytoplasm</keyword>
<keyword id="KW-0276">Fatty acid metabolism</keyword>
<keyword id="KW-0413">Isomerase</keyword>
<keyword id="KW-0442">Lipid degradation</keyword>
<keyword id="KW-0443">Lipid metabolism</keyword>
<keyword id="KW-0456">Lyase</keyword>
<keyword id="KW-0511">Multifunctional enzyme</keyword>
<keyword id="KW-0520">NAD</keyword>
<keyword id="KW-0560">Oxidoreductase</keyword>
<keyword id="KW-1185">Reference proteome</keyword>
<gene>
    <name evidence="1" type="primary">fadJ</name>
    <name type="ordered locus">SF2419</name>
    <name type="ordered locus">S2554</name>
</gene>
<proteinExistence type="inferred from homology"/>
<organism>
    <name type="scientific">Shigella flexneri</name>
    <dbReference type="NCBI Taxonomy" id="623"/>
    <lineage>
        <taxon>Bacteria</taxon>
        <taxon>Pseudomonadati</taxon>
        <taxon>Pseudomonadota</taxon>
        <taxon>Gammaproteobacteria</taxon>
        <taxon>Enterobacterales</taxon>
        <taxon>Enterobacteriaceae</taxon>
        <taxon>Shigella</taxon>
    </lineage>
</organism>
<dbReference type="EC" id="4.2.1.17" evidence="1"/>
<dbReference type="EC" id="5.1.2.3" evidence="1"/>
<dbReference type="EC" id="1.1.1.35" evidence="1"/>
<dbReference type="EMBL" id="AE005674">
    <property type="protein sequence ID" value="AAN43930.1"/>
    <property type="molecule type" value="Genomic_DNA"/>
</dbReference>
<dbReference type="EMBL" id="AE014073">
    <property type="protein sequence ID" value="AAP17743.1"/>
    <property type="molecule type" value="Genomic_DNA"/>
</dbReference>
<dbReference type="RefSeq" id="NP_708223.1">
    <property type="nucleotide sequence ID" value="NC_004337.2"/>
</dbReference>
<dbReference type="RefSeq" id="WP_000424986.1">
    <property type="nucleotide sequence ID" value="NZ_WPGW01000166.1"/>
</dbReference>
<dbReference type="SMR" id="Q83QQ0"/>
<dbReference type="STRING" id="198214.SF2419"/>
<dbReference type="PaxDb" id="198214-SF2419"/>
<dbReference type="GeneID" id="1027221"/>
<dbReference type="GeneID" id="93774835"/>
<dbReference type="KEGG" id="sfl:SF2419"/>
<dbReference type="KEGG" id="sfx:S2554"/>
<dbReference type="PATRIC" id="fig|198214.7.peg.2889"/>
<dbReference type="HOGENOM" id="CLU_009834_16_1_6"/>
<dbReference type="UniPathway" id="UPA00659"/>
<dbReference type="Proteomes" id="UP000001006">
    <property type="component" value="Chromosome"/>
</dbReference>
<dbReference type="Proteomes" id="UP000002673">
    <property type="component" value="Chromosome"/>
</dbReference>
<dbReference type="GO" id="GO:0005737">
    <property type="term" value="C:cytoplasm"/>
    <property type="evidence" value="ECO:0007669"/>
    <property type="project" value="UniProtKB-SubCell"/>
</dbReference>
<dbReference type="GO" id="GO:0008692">
    <property type="term" value="F:3-hydroxybutyryl-CoA epimerase activity"/>
    <property type="evidence" value="ECO:0007669"/>
    <property type="project" value="UniProtKB-UniRule"/>
</dbReference>
<dbReference type="GO" id="GO:0004300">
    <property type="term" value="F:enoyl-CoA hydratase activity"/>
    <property type="evidence" value="ECO:0007669"/>
    <property type="project" value="UniProtKB-UniRule"/>
</dbReference>
<dbReference type="GO" id="GO:0016509">
    <property type="term" value="F:long-chain-3-hydroxyacyl-CoA dehydrogenase activity"/>
    <property type="evidence" value="ECO:0007669"/>
    <property type="project" value="TreeGrafter"/>
</dbReference>
<dbReference type="GO" id="GO:0070403">
    <property type="term" value="F:NAD+ binding"/>
    <property type="evidence" value="ECO:0007669"/>
    <property type="project" value="InterPro"/>
</dbReference>
<dbReference type="GO" id="GO:0006635">
    <property type="term" value="P:fatty acid beta-oxidation"/>
    <property type="evidence" value="ECO:0007669"/>
    <property type="project" value="UniProtKB-UniRule"/>
</dbReference>
<dbReference type="CDD" id="cd06558">
    <property type="entry name" value="crotonase-like"/>
    <property type="match status" value="1"/>
</dbReference>
<dbReference type="FunFam" id="1.10.1040.50:FF:000003">
    <property type="entry name" value="Fatty acid oxidation complex subunit alpha"/>
    <property type="match status" value="1"/>
</dbReference>
<dbReference type="FunFam" id="3.90.226.10:FF:000011">
    <property type="entry name" value="Fatty acid oxidation complex subunit alpha"/>
    <property type="match status" value="1"/>
</dbReference>
<dbReference type="FunFam" id="3.40.50.720:FF:000009">
    <property type="entry name" value="Fatty oxidation complex, alpha subunit"/>
    <property type="match status" value="1"/>
</dbReference>
<dbReference type="Gene3D" id="1.10.1040.50">
    <property type="match status" value="1"/>
</dbReference>
<dbReference type="Gene3D" id="3.90.226.10">
    <property type="entry name" value="2-enoyl-CoA Hydratase, Chain A, domain 1"/>
    <property type="match status" value="1"/>
</dbReference>
<dbReference type="Gene3D" id="3.40.50.720">
    <property type="entry name" value="NAD(P)-binding Rossmann-like Domain"/>
    <property type="match status" value="1"/>
</dbReference>
<dbReference type="HAMAP" id="MF_01617">
    <property type="entry name" value="FadJ"/>
    <property type="match status" value="1"/>
</dbReference>
<dbReference type="InterPro" id="IPR006180">
    <property type="entry name" value="3-OHacyl-CoA_DH_CS"/>
</dbReference>
<dbReference type="InterPro" id="IPR006176">
    <property type="entry name" value="3-OHacyl-CoA_DH_NAD-bd"/>
</dbReference>
<dbReference type="InterPro" id="IPR006108">
    <property type="entry name" value="3HC_DH_C"/>
</dbReference>
<dbReference type="InterPro" id="IPR008927">
    <property type="entry name" value="6-PGluconate_DH-like_C_sf"/>
</dbReference>
<dbReference type="InterPro" id="IPR029045">
    <property type="entry name" value="ClpP/crotonase-like_dom_sf"/>
</dbReference>
<dbReference type="InterPro" id="IPR001753">
    <property type="entry name" value="Enoyl-CoA_hydra/iso"/>
</dbReference>
<dbReference type="InterPro" id="IPR050136">
    <property type="entry name" value="FA_oxidation_alpha_subunit"/>
</dbReference>
<dbReference type="InterPro" id="IPR012802">
    <property type="entry name" value="FadJ"/>
</dbReference>
<dbReference type="InterPro" id="IPR036291">
    <property type="entry name" value="NAD(P)-bd_dom_sf"/>
</dbReference>
<dbReference type="NCBIfam" id="TIGR02440">
    <property type="entry name" value="FadJ"/>
    <property type="match status" value="1"/>
</dbReference>
<dbReference type="NCBIfam" id="NF008363">
    <property type="entry name" value="PRK11154.1"/>
    <property type="match status" value="1"/>
</dbReference>
<dbReference type="PANTHER" id="PTHR43612">
    <property type="entry name" value="TRIFUNCTIONAL ENZYME SUBUNIT ALPHA"/>
    <property type="match status" value="1"/>
</dbReference>
<dbReference type="PANTHER" id="PTHR43612:SF3">
    <property type="entry name" value="TRIFUNCTIONAL ENZYME SUBUNIT ALPHA, MITOCHONDRIAL"/>
    <property type="match status" value="1"/>
</dbReference>
<dbReference type="Pfam" id="PF00725">
    <property type="entry name" value="3HCDH"/>
    <property type="match status" value="2"/>
</dbReference>
<dbReference type="Pfam" id="PF02737">
    <property type="entry name" value="3HCDH_N"/>
    <property type="match status" value="1"/>
</dbReference>
<dbReference type="Pfam" id="PF00378">
    <property type="entry name" value="ECH_1"/>
    <property type="match status" value="1"/>
</dbReference>
<dbReference type="SUPFAM" id="SSF48179">
    <property type="entry name" value="6-phosphogluconate dehydrogenase C-terminal domain-like"/>
    <property type="match status" value="2"/>
</dbReference>
<dbReference type="SUPFAM" id="SSF52096">
    <property type="entry name" value="ClpP/crotonase"/>
    <property type="match status" value="1"/>
</dbReference>
<dbReference type="SUPFAM" id="SSF51735">
    <property type="entry name" value="NAD(P)-binding Rossmann-fold domains"/>
    <property type="match status" value="1"/>
</dbReference>
<dbReference type="PROSITE" id="PS00067">
    <property type="entry name" value="3HCDH"/>
    <property type="match status" value="1"/>
</dbReference>
<evidence type="ECO:0000255" key="1">
    <source>
        <dbReference type="HAMAP-Rule" id="MF_01617"/>
    </source>
</evidence>
<reference key="1">
    <citation type="journal article" date="2002" name="Nucleic Acids Res.">
        <title>Genome sequence of Shigella flexneri 2a: insights into pathogenicity through comparison with genomes of Escherichia coli K12 and O157.</title>
        <authorList>
            <person name="Jin Q."/>
            <person name="Yuan Z."/>
            <person name="Xu J."/>
            <person name="Wang Y."/>
            <person name="Shen Y."/>
            <person name="Lu W."/>
            <person name="Wang J."/>
            <person name="Liu H."/>
            <person name="Yang J."/>
            <person name="Yang F."/>
            <person name="Zhang X."/>
            <person name="Zhang J."/>
            <person name="Yang G."/>
            <person name="Wu H."/>
            <person name="Qu D."/>
            <person name="Dong J."/>
            <person name="Sun L."/>
            <person name="Xue Y."/>
            <person name="Zhao A."/>
            <person name="Gao Y."/>
            <person name="Zhu J."/>
            <person name="Kan B."/>
            <person name="Ding K."/>
            <person name="Chen S."/>
            <person name="Cheng H."/>
            <person name="Yao Z."/>
            <person name="He B."/>
            <person name="Chen R."/>
            <person name="Ma D."/>
            <person name="Qiang B."/>
            <person name="Wen Y."/>
            <person name="Hou Y."/>
            <person name="Yu J."/>
        </authorList>
    </citation>
    <scope>NUCLEOTIDE SEQUENCE [LARGE SCALE GENOMIC DNA]</scope>
    <source>
        <strain>301 / Serotype 2a</strain>
    </source>
</reference>
<reference key="2">
    <citation type="journal article" date="2003" name="Infect. Immun.">
        <title>Complete genome sequence and comparative genomics of Shigella flexneri serotype 2a strain 2457T.</title>
        <authorList>
            <person name="Wei J."/>
            <person name="Goldberg M.B."/>
            <person name="Burland V."/>
            <person name="Venkatesan M.M."/>
            <person name="Deng W."/>
            <person name="Fournier G."/>
            <person name="Mayhew G.F."/>
            <person name="Plunkett G. III"/>
            <person name="Rose D.J."/>
            <person name="Darling A."/>
            <person name="Mau B."/>
            <person name="Perna N.T."/>
            <person name="Payne S.M."/>
            <person name="Runyen-Janecky L.J."/>
            <person name="Zhou S."/>
            <person name="Schwartz D.C."/>
            <person name="Blattner F.R."/>
        </authorList>
    </citation>
    <scope>NUCLEOTIDE SEQUENCE [LARGE SCALE GENOMIC DNA]</scope>
    <source>
        <strain>ATCC 700930 / 2457T / Serotype 2a</strain>
    </source>
</reference>
<comment type="function">
    <text evidence="1">Catalyzes the formation of a hydroxyacyl-CoA by addition of water on enoyl-CoA. Also exhibits 3-hydroxyacyl-CoA epimerase and 3-hydroxyacyl-CoA dehydrogenase activities.</text>
</comment>
<comment type="catalytic activity">
    <reaction evidence="1">
        <text>a (3S)-3-hydroxyacyl-CoA = a (2E)-enoyl-CoA + H2O</text>
        <dbReference type="Rhea" id="RHEA:16105"/>
        <dbReference type="ChEBI" id="CHEBI:15377"/>
        <dbReference type="ChEBI" id="CHEBI:57318"/>
        <dbReference type="ChEBI" id="CHEBI:58856"/>
        <dbReference type="EC" id="4.2.1.17"/>
    </reaction>
</comment>
<comment type="catalytic activity">
    <reaction evidence="1">
        <text>a 4-saturated-(3S)-3-hydroxyacyl-CoA = a (3E)-enoyl-CoA + H2O</text>
        <dbReference type="Rhea" id="RHEA:20724"/>
        <dbReference type="ChEBI" id="CHEBI:15377"/>
        <dbReference type="ChEBI" id="CHEBI:58521"/>
        <dbReference type="ChEBI" id="CHEBI:137480"/>
        <dbReference type="EC" id="4.2.1.17"/>
    </reaction>
</comment>
<comment type="catalytic activity">
    <reaction evidence="1">
        <text>a (3S)-3-hydroxyacyl-CoA + NAD(+) = a 3-oxoacyl-CoA + NADH + H(+)</text>
        <dbReference type="Rhea" id="RHEA:22432"/>
        <dbReference type="ChEBI" id="CHEBI:15378"/>
        <dbReference type="ChEBI" id="CHEBI:57318"/>
        <dbReference type="ChEBI" id="CHEBI:57540"/>
        <dbReference type="ChEBI" id="CHEBI:57945"/>
        <dbReference type="ChEBI" id="CHEBI:90726"/>
        <dbReference type="EC" id="1.1.1.35"/>
    </reaction>
</comment>
<comment type="catalytic activity">
    <reaction evidence="1">
        <text>(3S)-3-hydroxybutanoyl-CoA = (3R)-3-hydroxybutanoyl-CoA</text>
        <dbReference type="Rhea" id="RHEA:21760"/>
        <dbReference type="ChEBI" id="CHEBI:57315"/>
        <dbReference type="ChEBI" id="CHEBI:57316"/>
        <dbReference type="EC" id="5.1.2.3"/>
    </reaction>
</comment>
<comment type="pathway">
    <text evidence="1">Lipid metabolism; fatty acid beta-oxidation.</text>
</comment>
<comment type="subunit">
    <text evidence="1">Heterotetramer of two alpha chains (FadJ) and two beta chains (FadI).</text>
</comment>
<comment type="subcellular location">
    <subcellularLocation>
        <location evidence="1">Cytoplasm</location>
    </subcellularLocation>
</comment>
<comment type="similarity">
    <text evidence="1">In the N-terminal section; belongs to the enoyl-CoA hydratase/isomerase family.</text>
</comment>
<comment type="similarity">
    <text evidence="1">In the central section; belongs to the 3-hydroxyacyl-CoA dehydrogenase family.</text>
</comment>
<protein>
    <recommendedName>
        <fullName evidence="1">Fatty acid oxidation complex subunit alpha</fullName>
    </recommendedName>
    <domain>
        <recommendedName>
            <fullName evidence="1">Enoyl-CoA hydratase/3-hydroxybutyryl-CoA epimerase</fullName>
            <ecNumber evidence="1">4.2.1.17</ecNumber>
            <ecNumber evidence="1">5.1.2.3</ecNumber>
        </recommendedName>
    </domain>
    <domain>
        <recommendedName>
            <fullName evidence="1">3-hydroxyacyl-CoA dehydrogenase</fullName>
            <ecNumber evidence="1">1.1.1.35</ecNumber>
        </recommendedName>
    </domain>
</protein>
<accession>Q83QQ0</accession>
<accession>Q7C0M2</accession>
<feature type="chain" id="PRO_0000109309" description="Fatty acid oxidation complex subunit alpha">
    <location>
        <begin position="1"/>
        <end position="714"/>
    </location>
</feature>
<feature type="region of interest" description="Enoyl-CoA hydratase" evidence="1">
    <location>
        <begin position="1"/>
        <end position="190"/>
    </location>
</feature>
<feature type="region of interest" description="3-hydroxyacyl-CoA dehydrogenase" evidence="1">
    <location>
        <begin position="306"/>
        <end position="714"/>
    </location>
</feature>
<feature type="site" description="Important for catalytic activity" evidence="1">
    <location>
        <position position="118"/>
    </location>
</feature>
<feature type="site" description="Important for catalytic activity" evidence="1">
    <location>
        <position position="140"/>
    </location>
</feature>
<name>FADJ_SHIFL</name>